<sequence length="118" mass="12867">MISKPDKNKLRQKRHRRVRGKLSGTADRPRLNVFRSNTGIYAQVIDDVAGVTLASASTLDKEVSKGTKTEQAVAVGKLVAERANAKGISEVVFDRGGYLYHGRVKALADAARENGLKF</sequence>
<evidence type="ECO:0000255" key="1">
    <source>
        <dbReference type="HAMAP-Rule" id="MF_01337"/>
    </source>
</evidence>
<evidence type="ECO:0000256" key="2">
    <source>
        <dbReference type="SAM" id="MobiDB-lite"/>
    </source>
</evidence>
<evidence type="ECO:0000305" key="3"/>
<protein>
    <recommendedName>
        <fullName evidence="1">Large ribosomal subunit protein uL18</fullName>
    </recommendedName>
    <alternativeName>
        <fullName evidence="3">50S ribosomal protein L18</fullName>
    </alternativeName>
</protein>
<name>RL18_STRPJ</name>
<gene>
    <name evidence="1" type="primary">rplR</name>
    <name type="ordered locus">SPN23F02150</name>
</gene>
<dbReference type="EMBL" id="FM211187">
    <property type="protein sequence ID" value="CAR68075.1"/>
    <property type="molecule type" value="Genomic_DNA"/>
</dbReference>
<dbReference type="RefSeq" id="WP_000624044.1">
    <property type="nucleotide sequence ID" value="NC_011900.1"/>
</dbReference>
<dbReference type="SMR" id="B8ZKP6"/>
<dbReference type="GeneID" id="93738973"/>
<dbReference type="KEGG" id="sne:SPN23F02150"/>
<dbReference type="HOGENOM" id="CLU_098841_0_1_9"/>
<dbReference type="GO" id="GO:0022625">
    <property type="term" value="C:cytosolic large ribosomal subunit"/>
    <property type="evidence" value="ECO:0007669"/>
    <property type="project" value="TreeGrafter"/>
</dbReference>
<dbReference type="GO" id="GO:0008097">
    <property type="term" value="F:5S rRNA binding"/>
    <property type="evidence" value="ECO:0007669"/>
    <property type="project" value="TreeGrafter"/>
</dbReference>
<dbReference type="GO" id="GO:0003735">
    <property type="term" value="F:structural constituent of ribosome"/>
    <property type="evidence" value="ECO:0007669"/>
    <property type="project" value="InterPro"/>
</dbReference>
<dbReference type="GO" id="GO:0006412">
    <property type="term" value="P:translation"/>
    <property type="evidence" value="ECO:0007669"/>
    <property type="project" value="UniProtKB-UniRule"/>
</dbReference>
<dbReference type="CDD" id="cd00432">
    <property type="entry name" value="Ribosomal_L18_L5e"/>
    <property type="match status" value="1"/>
</dbReference>
<dbReference type="FunFam" id="3.30.420.100:FF:000001">
    <property type="entry name" value="50S ribosomal protein L18"/>
    <property type="match status" value="1"/>
</dbReference>
<dbReference type="Gene3D" id="3.30.420.100">
    <property type="match status" value="1"/>
</dbReference>
<dbReference type="HAMAP" id="MF_01337_B">
    <property type="entry name" value="Ribosomal_uL18_B"/>
    <property type="match status" value="1"/>
</dbReference>
<dbReference type="InterPro" id="IPR004389">
    <property type="entry name" value="Ribosomal_uL18_bac-type"/>
</dbReference>
<dbReference type="InterPro" id="IPR005484">
    <property type="entry name" value="Ribosomal_uL18_bac/euk"/>
</dbReference>
<dbReference type="NCBIfam" id="TIGR00060">
    <property type="entry name" value="L18_bact"/>
    <property type="match status" value="1"/>
</dbReference>
<dbReference type="PANTHER" id="PTHR12899">
    <property type="entry name" value="39S RIBOSOMAL PROTEIN L18, MITOCHONDRIAL"/>
    <property type="match status" value="1"/>
</dbReference>
<dbReference type="PANTHER" id="PTHR12899:SF3">
    <property type="entry name" value="LARGE RIBOSOMAL SUBUNIT PROTEIN UL18M"/>
    <property type="match status" value="1"/>
</dbReference>
<dbReference type="Pfam" id="PF00861">
    <property type="entry name" value="Ribosomal_L18p"/>
    <property type="match status" value="1"/>
</dbReference>
<dbReference type="SUPFAM" id="SSF53137">
    <property type="entry name" value="Translational machinery components"/>
    <property type="match status" value="1"/>
</dbReference>
<proteinExistence type="inferred from homology"/>
<feature type="chain" id="PRO_1000166251" description="Large ribosomal subunit protein uL18">
    <location>
        <begin position="1"/>
        <end position="118"/>
    </location>
</feature>
<feature type="region of interest" description="Disordered" evidence="2">
    <location>
        <begin position="1"/>
        <end position="25"/>
    </location>
</feature>
<feature type="compositionally biased region" description="Basic residues" evidence="2">
    <location>
        <begin position="10"/>
        <end position="20"/>
    </location>
</feature>
<reference key="1">
    <citation type="journal article" date="2009" name="J. Bacteriol.">
        <title>Role of conjugative elements in the evolution of the multidrug-resistant pandemic clone Streptococcus pneumoniae Spain23F ST81.</title>
        <authorList>
            <person name="Croucher N.J."/>
            <person name="Walker D."/>
            <person name="Romero P."/>
            <person name="Lennard N."/>
            <person name="Paterson G.K."/>
            <person name="Bason N.C."/>
            <person name="Mitchell A.M."/>
            <person name="Quail M.A."/>
            <person name="Andrew P.W."/>
            <person name="Parkhill J."/>
            <person name="Bentley S.D."/>
            <person name="Mitchell T.J."/>
        </authorList>
    </citation>
    <scope>NUCLEOTIDE SEQUENCE [LARGE SCALE GENOMIC DNA]</scope>
    <source>
        <strain>ATCC 700669 / Spain 23F-1</strain>
    </source>
</reference>
<keyword id="KW-0687">Ribonucleoprotein</keyword>
<keyword id="KW-0689">Ribosomal protein</keyword>
<keyword id="KW-0694">RNA-binding</keyword>
<keyword id="KW-0699">rRNA-binding</keyword>
<accession>B8ZKP6</accession>
<organism>
    <name type="scientific">Streptococcus pneumoniae (strain ATCC 700669 / Spain 23F-1)</name>
    <dbReference type="NCBI Taxonomy" id="561276"/>
    <lineage>
        <taxon>Bacteria</taxon>
        <taxon>Bacillati</taxon>
        <taxon>Bacillota</taxon>
        <taxon>Bacilli</taxon>
        <taxon>Lactobacillales</taxon>
        <taxon>Streptococcaceae</taxon>
        <taxon>Streptococcus</taxon>
    </lineage>
</organism>
<comment type="function">
    <text evidence="1">This is one of the proteins that bind and probably mediate the attachment of the 5S RNA into the large ribosomal subunit, where it forms part of the central protuberance.</text>
</comment>
<comment type="subunit">
    <text evidence="1">Part of the 50S ribosomal subunit; part of the 5S rRNA/L5/L18/L25 subcomplex. Contacts the 5S and 23S rRNAs.</text>
</comment>
<comment type="similarity">
    <text evidence="1">Belongs to the universal ribosomal protein uL18 family.</text>
</comment>